<name>MRAY_PARL1</name>
<proteinExistence type="inferred from homology"/>
<sequence>MLYDLLGGMAGDIQALNVFRYITFRTGGATVTALLISFLFGPRIIALLKAKQRRGQPIREDGPQTHIIQKQGTPTMGGFLILVGLVPSVLLWADWSNRYVWIVLFVTLGFGAVGFADDYLKVSKISPKGVPGRVKLFFEFVIALIAMWALVLVSSEPLQTALTVPFFKTLLIELGGFFFLFGALVIVGSSNAVNLTDGLDGLAIVPVMIAAASLGLIVYLVGNAVFADYLQIHFVPGTGELAVFCGALIGAGLGFLWYNAPPAMVFMGDTGSLALGGALGAIAVAAKHELVLAIIGGLFVLEAVSVIVQVASFKLTGKRVFRMAPLHHHFEQKGWAEPTVVVRFWIISVVLAMAGLATLKLR</sequence>
<keyword id="KW-0131">Cell cycle</keyword>
<keyword id="KW-0132">Cell division</keyword>
<keyword id="KW-0997">Cell inner membrane</keyword>
<keyword id="KW-1003">Cell membrane</keyword>
<keyword id="KW-0133">Cell shape</keyword>
<keyword id="KW-0961">Cell wall biogenesis/degradation</keyword>
<keyword id="KW-0460">Magnesium</keyword>
<keyword id="KW-0472">Membrane</keyword>
<keyword id="KW-0479">Metal-binding</keyword>
<keyword id="KW-0573">Peptidoglycan synthesis</keyword>
<keyword id="KW-1185">Reference proteome</keyword>
<keyword id="KW-0808">Transferase</keyword>
<keyword id="KW-0812">Transmembrane</keyword>
<keyword id="KW-1133">Transmembrane helix</keyword>
<feature type="chain" id="PRO_1000071051" description="Phospho-N-acetylmuramoyl-pentapeptide-transferase">
    <location>
        <begin position="1"/>
        <end position="362"/>
    </location>
</feature>
<feature type="transmembrane region" description="Helical" evidence="1">
    <location>
        <begin position="28"/>
        <end position="48"/>
    </location>
</feature>
<feature type="transmembrane region" description="Helical" evidence="1">
    <location>
        <begin position="73"/>
        <end position="93"/>
    </location>
</feature>
<feature type="transmembrane region" description="Helical" evidence="1">
    <location>
        <begin position="100"/>
        <end position="120"/>
    </location>
</feature>
<feature type="transmembrane region" description="Helical" evidence="1">
    <location>
        <begin position="134"/>
        <end position="154"/>
    </location>
</feature>
<feature type="transmembrane region" description="Helical" evidence="1">
    <location>
        <begin position="169"/>
        <end position="189"/>
    </location>
</feature>
<feature type="transmembrane region" description="Helical" evidence="1">
    <location>
        <begin position="201"/>
        <end position="221"/>
    </location>
</feature>
<feature type="transmembrane region" description="Helical" evidence="1">
    <location>
        <begin position="241"/>
        <end position="261"/>
    </location>
</feature>
<feature type="transmembrane region" description="Helical" evidence="1">
    <location>
        <begin position="264"/>
        <end position="284"/>
    </location>
</feature>
<feature type="transmembrane region" description="Helical" evidence="1">
    <location>
        <begin position="290"/>
        <end position="310"/>
    </location>
</feature>
<feature type="transmembrane region" description="Helical" evidence="1">
    <location>
        <begin position="339"/>
        <end position="359"/>
    </location>
</feature>
<organism>
    <name type="scientific">Parvibaculum lavamentivorans (strain DS-1 / DSM 13023 / NCIMB 13966)</name>
    <dbReference type="NCBI Taxonomy" id="402881"/>
    <lineage>
        <taxon>Bacteria</taxon>
        <taxon>Pseudomonadati</taxon>
        <taxon>Pseudomonadota</taxon>
        <taxon>Alphaproteobacteria</taxon>
        <taxon>Hyphomicrobiales</taxon>
        <taxon>Parvibaculaceae</taxon>
        <taxon>Parvibaculum</taxon>
    </lineage>
</organism>
<accession>A7HVU4</accession>
<reference key="1">
    <citation type="journal article" date="2011" name="Stand. Genomic Sci.">
        <title>Complete genome sequence of Parvibaculum lavamentivorans type strain (DS-1(T)).</title>
        <authorList>
            <person name="Schleheck D."/>
            <person name="Weiss M."/>
            <person name="Pitluck S."/>
            <person name="Bruce D."/>
            <person name="Land M.L."/>
            <person name="Han S."/>
            <person name="Saunders E."/>
            <person name="Tapia R."/>
            <person name="Detter C."/>
            <person name="Brettin T."/>
            <person name="Han J."/>
            <person name="Woyke T."/>
            <person name="Goodwin L."/>
            <person name="Pennacchio L."/>
            <person name="Nolan M."/>
            <person name="Cook A.M."/>
            <person name="Kjelleberg S."/>
            <person name="Thomas T."/>
        </authorList>
    </citation>
    <scope>NUCLEOTIDE SEQUENCE [LARGE SCALE GENOMIC DNA]</scope>
    <source>
        <strain>DS-1 / DSM 13023 / NCIMB 13966</strain>
    </source>
</reference>
<dbReference type="EC" id="2.7.8.13" evidence="1"/>
<dbReference type="EMBL" id="CP000774">
    <property type="protein sequence ID" value="ABS64027.1"/>
    <property type="molecule type" value="Genomic_DNA"/>
</dbReference>
<dbReference type="RefSeq" id="WP_012111336.1">
    <property type="nucleotide sequence ID" value="NC_009719.1"/>
</dbReference>
<dbReference type="SMR" id="A7HVU4"/>
<dbReference type="STRING" id="402881.Plav_2418"/>
<dbReference type="KEGG" id="pla:Plav_2418"/>
<dbReference type="eggNOG" id="COG0472">
    <property type="taxonomic scope" value="Bacteria"/>
</dbReference>
<dbReference type="HOGENOM" id="CLU_023982_0_0_5"/>
<dbReference type="OrthoDB" id="9805475at2"/>
<dbReference type="UniPathway" id="UPA00219"/>
<dbReference type="Proteomes" id="UP000006377">
    <property type="component" value="Chromosome"/>
</dbReference>
<dbReference type="GO" id="GO:0005886">
    <property type="term" value="C:plasma membrane"/>
    <property type="evidence" value="ECO:0007669"/>
    <property type="project" value="UniProtKB-SubCell"/>
</dbReference>
<dbReference type="GO" id="GO:0046872">
    <property type="term" value="F:metal ion binding"/>
    <property type="evidence" value="ECO:0007669"/>
    <property type="project" value="UniProtKB-KW"/>
</dbReference>
<dbReference type="GO" id="GO:0008963">
    <property type="term" value="F:phospho-N-acetylmuramoyl-pentapeptide-transferase activity"/>
    <property type="evidence" value="ECO:0007669"/>
    <property type="project" value="UniProtKB-UniRule"/>
</dbReference>
<dbReference type="GO" id="GO:0051992">
    <property type="term" value="F:UDP-N-acetylmuramoyl-L-alanyl-D-glutamyl-meso-2,6-diaminopimelyl-D-alanyl-D-alanine:undecaprenyl-phosphate transferase activity"/>
    <property type="evidence" value="ECO:0007669"/>
    <property type="project" value="RHEA"/>
</dbReference>
<dbReference type="GO" id="GO:0051301">
    <property type="term" value="P:cell division"/>
    <property type="evidence" value="ECO:0007669"/>
    <property type="project" value="UniProtKB-KW"/>
</dbReference>
<dbReference type="GO" id="GO:0071555">
    <property type="term" value="P:cell wall organization"/>
    <property type="evidence" value="ECO:0007669"/>
    <property type="project" value="UniProtKB-KW"/>
</dbReference>
<dbReference type="GO" id="GO:0009252">
    <property type="term" value="P:peptidoglycan biosynthetic process"/>
    <property type="evidence" value="ECO:0007669"/>
    <property type="project" value="UniProtKB-UniRule"/>
</dbReference>
<dbReference type="GO" id="GO:0008360">
    <property type="term" value="P:regulation of cell shape"/>
    <property type="evidence" value="ECO:0007669"/>
    <property type="project" value="UniProtKB-KW"/>
</dbReference>
<dbReference type="CDD" id="cd06852">
    <property type="entry name" value="GT_MraY"/>
    <property type="match status" value="1"/>
</dbReference>
<dbReference type="HAMAP" id="MF_00038">
    <property type="entry name" value="MraY"/>
    <property type="match status" value="1"/>
</dbReference>
<dbReference type="InterPro" id="IPR000715">
    <property type="entry name" value="Glycosyl_transferase_4"/>
</dbReference>
<dbReference type="InterPro" id="IPR003524">
    <property type="entry name" value="PNAcMuramoyl-5peptid_Trfase"/>
</dbReference>
<dbReference type="InterPro" id="IPR018480">
    <property type="entry name" value="PNAcMuramoyl-5peptid_Trfase_CS"/>
</dbReference>
<dbReference type="NCBIfam" id="TIGR00445">
    <property type="entry name" value="mraY"/>
    <property type="match status" value="1"/>
</dbReference>
<dbReference type="PANTHER" id="PTHR22926">
    <property type="entry name" value="PHOSPHO-N-ACETYLMURAMOYL-PENTAPEPTIDE-TRANSFERASE"/>
    <property type="match status" value="1"/>
</dbReference>
<dbReference type="PANTHER" id="PTHR22926:SF5">
    <property type="entry name" value="PHOSPHO-N-ACETYLMURAMOYL-PENTAPEPTIDE-TRANSFERASE HOMOLOG"/>
    <property type="match status" value="1"/>
</dbReference>
<dbReference type="Pfam" id="PF00953">
    <property type="entry name" value="Glycos_transf_4"/>
    <property type="match status" value="1"/>
</dbReference>
<dbReference type="Pfam" id="PF10555">
    <property type="entry name" value="MraY_sig1"/>
    <property type="match status" value="1"/>
</dbReference>
<dbReference type="PROSITE" id="PS01348">
    <property type="entry name" value="MRAY_2"/>
    <property type="match status" value="1"/>
</dbReference>
<protein>
    <recommendedName>
        <fullName evidence="1">Phospho-N-acetylmuramoyl-pentapeptide-transferase</fullName>
        <ecNumber evidence="1">2.7.8.13</ecNumber>
    </recommendedName>
    <alternativeName>
        <fullName evidence="1">UDP-MurNAc-pentapeptide phosphotransferase</fullName>
    </alternativeName>
</protein>
<comment type="function">
    <text evidence="1">Catalyzes the initial step of the lipid cycle reactions in the biosynthesis of the cell wall peptidoglycan: transfers peptidoglycan precursor phospho-MurNAc-pentapeptide from UDP-MurNAc-pentapeptide onto the lipid carrier undecaprenyl phosphate, yielding undecaprenyl-pyrophosphoryl-MurNAc-pentapeptide, known as lipid I.</text>
</comment>
<comment type="catalytic activity">
    <reaction evidence="1">
        <text>UDP-N-acetyl-alpha-D-muramoyl-L-alanyl-gamma-D-glutamyl-meso-2,6-diaminopimeloyl-D-alanyl-D-alanine + di-trans,octa-cis-undecaprenyl phosphate = di-trans,octa-cis-undecaprenyl diphospho-N-acetyl-alpha-D-muramoyl-L-alanyl-D-glutamyl-meso-2,6-diaminopimeloyl-D-alanyl-D-alanine + UMP</text>
        <dbReference type="Rhea" id="RHEA:28386"/>
        <dbReference type="ChEBI" id="CHEBI:57865"/>
        <dbReference type="ChEBI" id="CHEBI:60392"/>
        <dbReference type="ChEBI" id="CHEBI:61386"/>
        <dbReference type="ChEBI" id="CHEBI:61387"/>
        <dbReference type="EC" id="2.7.8.13"/>
    </reaction>
</comment>
<comment type="cofactor">
    <cofactor evidence="1">
        <name>Mg(2+)</name>
        <dbReference type="ChEBI" id="CHEBI:18420"/>
    </cofactor>
</comment>
<comment type="pathway">
    <text evidence="1">Cell wall biogenesis; peptidoglycan biosynthesis.</text>
</comment>
<comment type="subcellular location">
    <subcellularLocation>
        <location evidence="1">Cell inner membrane</location>
        <topology evidence="1">Multi-pass membrane protein</topology>
    </subcellularLocation>
</comment>
<comment type="similarity">
    <text evidence="1">Belongs to the glycosyltransferase 4 family. MraY subfamily.</text>
</comment>
<gene>
    <name evidence="1" type="primary">mraY</name>
    <name type="ordered locus">Plav_2418</name>
</gene>
<evidence type="ECO:0000255" key="1">
    <source>
        <dbReference type="HAMAP-Rule" id="MF_00038"/>
    </source>
</evidence>